<keyword id="KW-1185">Reference proteome</keyword>
<keyword id="KW-0687">Ribonucleoprotein</keyword>
<keyword id="KW-0689">Ribosomal protein</keyword>
<organism>
    <name type="scientific">Neisseria meningitidis serogroup B (strain ATCC BAA-335 / MC58)</name>
    <dbReference type="NCBI Taxonomy" id="122586"/>
    <lineage>
        <taxon>Bacteria</taxon>
        <taxon>Pseudomonadati</taxon>
        <taxon>Pseudomonadota</taxon>
        <taxon>Betaproteobacteria</taxon>
        <taxon>Neisseriales</taxon>
        <taxon>Neisseriaceae</taxon>
        <taxon>Neisseria</taxon>
    </lineage>
</organism>
<name>RL32_NEIMB</name>
<comment type="similarity">
    <text evidence="3">Belongs to the bacterial ribosomal protein bL32 family.</text>
</comment>
<reference key="1">
    <citation type="journal article" date="2000" name="Science">
        <title>Complete genome sequence of Neisseria meningitidis serogroup B strain MC58.</title>
        <authorList>
            <person name="Tettelin H."/>
            <person name="Saunders N.J."/>
            <person name="Heidelberg J.F."/>
            <person name="Jeffries A.C."/>
            <person name="Nelson K.E."/>
            <person name="Eisen J.A."/>
            <person name="Ketchum K.A."/>
            <person name="Hood D.W."/>
            <person name="Peden J.F."/>
            <person name="Dodson R.J."/>
            <person name="Nelson W.C."/>
            <person name="Gwinn M.L."/>
            <person name="DeBoy R.T."/>
            <person name="Peterson J.D."/>
            <person name="Hickey E.K."/>
            <person name="Haft D.H."/>
            <person name="Salzberg S.L."/>
            <person name="White O."/>
            <person name="Fleischmann R.D."/>
            <person name="Dougherty B.A."/>
            <person name="Mason T.M."/>
            <person name="Ciecko A."/>
            <person name="Parksey D.S."/>
            <person name="Blair E."/>
            <person name="Cittone H."/>
            <person name="Clark E.B."/>
            <person name="Cotton M.D."/>
            <person name="Utterback T.R."/>
            <person name="Khouri H.M."/>
            <person name="Qin H."/>
            <person name="Vamathevan J.J."/>
            <person name="Gill J."/>
            <person name="Scarlato V."/>
            <person name="Masignani V."/>
            <person name="Pizza M."/>
            <person name="Grandi G."/>
            <person name="Sun L."/>
            <person name="Smith H.O."/>
            <person name="Fraser C.M."/>
            <person name="Moxon E.R."/>
            <person name="Rappuoli R."/>
            <person name="Venter J.C."/>
        </authorList>
    </citation>
    <scope>NUCLEOTIDE SEQUENCE [LARGE SCALE GENOMIC DNA]</scope>
    <source>
        <strain>ATCC BAA-335 / MC58</strain>
    </source>
</reference>
<gene>
    <name type="primary">rpmF</name>
    <name type="ordered locus">NMB1911</name>
</gene>
<accession>Q9JXS0</accession>
<protein>
    <recommendedName>
        <fullName evidence="3">Large ribosomal subunit protein bL32</fullName>
    </recommendedName>
    <alternativeName>
        <fullName>50S ribosomal protein L32</fullName>
    </alternativeName>
</protein>
<evidence type="ECO:0000250" key="1"/>
<evidence type="ECO:0000256" key="2">
    <source>
        <dbReference type="SAM" id="MobiDB-lite"/>
    </source>
</evidence>
<evidence type="ECO:0000305" key="3"/>
<dbReference type="EMBL" id="AE002098">
    <property type="protein sequence ID" value="AAF42241.1"/>
    <property type="molecule type" value="Genomic_DNA"/>
</dbReference>
<dbReference type="PIR" id="F81028">
    <property type="entry name" value="F81028"/>
</dbReference>
<dbReference type="RefSeq" id="NP_274905.1">
    <property type="nucleotide sequence ID" value="NC_003112.2"/>
</dbReference>
<dbReference type="RefSeq" id="WP_002214744.1">
    <property type="nucleotide sequence ID" value="NC_003112.2"/>
</dbReference>
<dbReference type="SMR" id="Q9JXS0"/>
<dbReference type="FunCoup" id="Q9JXS0">
    <property type="interactions" value="198"/>
</dbReference>
<dbReference type="STRING" id="122586.NMB1911"/>
<dbReference type="PaxDb" id="122586-NMB1911"/>
<dbReference type="GeneID" id="83615132"/>
<dbReference type="KEGG" id="nme:NMB1911"/>
<dbReference type="PATRIC" id="fig|122586.8.peg.2437"/>
<dbReference type="HOGENOM" id="CLU_129084_2_1_4"/>
<dbReference type="InParanoid" id="Q9JXS0"/>
<dbReference type="OrthoDB" id="9801927at2"/>
<dbReference type="Proteomes" id="UP000000425">
    <property type="component" value="Chromosome"/>
</dbReference>
<dbReference type="GO" id="GO:0022625">
    <property type="term" value="C:cytosolic large ribosomal subunit"/>
    <property type="evidence" value="ECO:0000318"/>
    <property type="project" value="GO_Central"/>
</dbReference>
<dbReference type="GO" id="GO:0003735">
    <property type="term" value="F:structural constituent of ribosome"/>
    <property type="evidence" value="ECO:0000318"/>
    <property type="project" value="GO_Central"/>
</dbReference>
<dbReference type="GO" id="GO:0006412">
    <property type="term" value="P:translation"/>
    <property type="evidence" value="ECO:0007669"/>
    <property type="project" value="UniProtKB-UniRule"/>
</dbReference>
<dbReference type="HAMAP" id="MF_00340">
    <property type="entry name" value="Ribosomal_bL32"/>
    <property type="match status" value="1"/>
</dbReference>
<dbReference type="InterPro" id="IPR002677">
    <property type="entry name" value="Ribosomal_bL32"/>
</dbReference>
<dbReference type="InterPro" id="IPR044957">
    <property type="entry name" value="Ribosomal_bL32_bact"/>
</dbReference>
<dbReference type="InterPro" id="IPR011332">
    <property type="entry name" value="Ribosomal_zn-bd"/>
</dbReference>
<dbReference type="NCBIfam" id="TIGR01031">
    <property type="entry name" value="rpmF_bact"/>
    <property type="match status" value="1"/>
</dbReference>
<dbReference type="PANTHER" id="PTHR35534">
    <property type="entry name" value="50S RIBOSOMAL PROTEIN L32"/>
    <property type="match status" value="1"/>
</dbReference>
<dbReference type="PANTHER" id="PTHR35534:SF1">
    <property type="entry name" value="LARGE RIBOSOMAL SUBUNIT PROTEIN BL32"/>
    <property type="match status" value="1"/>
</dbReference>
<dbReference type="Pfam" id="PF01783">
    <property type="entry name" value="Ribosomal_L32p"/>
    <property type="match status" value="1"/>
</dbReference>
<dbReference type="SUPFAM" id="SSF57829">
    <property type="entry name" value="Zn-binding ribosomal proteins"/>
    <property type="match status" value="1"/>
</dbReference>
<proteinExistence type="inferred from homology"/>
<sequence length="59" mass="6473">MAVQQNKKSPSKRGMHRSHDALTAPALSVDSTTGEVHRPHHISPNGMYRGRKVVKAKGE</sequence>
<feature type="initiator methionine" description="Removed" evidence="1">
    <location>
        <position position="1"/>
    </location>
</feature>
<feature type="chain" id="PRO_0000172376" description="Large ribosomal subunit protein bL32">
    <location>
        <begin position="2"/>
        <end position="59"/>
    </location>
</feature>
<feature type="region of interest" description="Disordered" evidence="2">
    <location>
        <begin position="1"/>
        <end position="59"/>
    </location>
</feature>
<feature type="compositionally biased region" description="Basic residues" evidence="2">
    <location>
        <begin position="49"/>
        <end position="59"/>
    </location>
</feature>